<sequence length="213" mass="23362">MLTIILLLIASYLLGAIPFGLWIGKIFFKKNLHDYGSGNTGTTNTFRILGVKAGISVFAFDLLKGTLATLLPLFFHINGVSPLIFGLLAVIGHTFSIFDRFKGGKAVATSAGVILGFSPLFLIYLLVVFIIVLWLFSMISLSSVIGAVFALLGILIFPSIGFILTSYDLLFSIIIFVLAIIIILRHRTNLKRIKNHCESLVPFGLNLSKQKEK</sequence>
<reference key="1">
    <citation type="journal article" date="2001" name="Genome Res.">
        <title>The complete genome sequence of the lactic acid bacterium Lactococcus lactis ssp. lactis IL1403.</title>
        <authorList>
            <person name="Bolotin A."/>
            <person name="Wincker P."/>
            <person name="Mauger S."/>
            <person name="Jaillon O."/>
            <person name="Malarme K."/>
            <person name="Weissenbach J."/>
            <person name="Ehrlich S.D."/>
            <person name="Sorokin A."/>
        </authorList>
    </citation>
    <scope>NUCLEOTIDE SEQUENCE [LARGE SCALE GENOMIC DNA]</scope>
    <source>
        <strain>IL1403</strain>
    </source>
</reference>
<gene>
    <name evidence="1" type="primary">plsY</name>
    <name type="synonym">ykaC</name>
    <name type="ordered locus">LL0978</name>
    <name type="ORF">L5517</name>
</gene>
<proteinExistence type="inferred from homology"/>
<organism>
    <name type="scientific">Lactococcus lactis subsp. lactis (strain IL1403)</name>
    <name type="common">Streptococcus lactis</name>
    <dbReference type="NCBI Taxonomy" id="272623"/>
    <lineage>
        <taxon>Bacteria</taxon>
        <taxon>Bacillati</taxon>
        <taxon>Bacillota</taxon>
        <taxon>Bacilli</taxon>
        <taxon>Lactobacillales</taxon>
        <taxon>Streptococcaceae</taxon>
        <taxon>Lactococcus</taxon>
    </lineage>
</organism>
<protein>
    <recommendedName>
        <fullName evidence="1">Glycerol-3-phosphate acyltransferase</fullName>
    </recommendedName>
    <alternativeName>
        <fullName evidence="1">Acyl-PO4 G3P acyltransferase</fullName>
    </alternativeName>
    <alternativeName>
        <fullName evidence="1">Acyl-phosphate--glycerol-3-phosphate acyltransferase</fullName>
    </alternativeName>
    <alternativeName>
        <fullName evidence="1">G3P acyltransferase</fullName>
        <shortName evidence="1">GPAT</shortName>
        <ecNumber evidence="1">2.3.1.275</ecNumber>
    </alternativeName>
    <alternativeName>
        <fullName evidence="1">Lysophosphatidic acid synthase</fullName>
        <shortName evidence="1">LPA synthase</shortName>
    </alternativeName>
</protein>
<keyword id="KW-1003">Cell membrane</keyword>
<keyword id="KW-0444">Lipid biosynthesis</keyword>
<keyword id="KW-0443">Lipid metabolism</keyword>
<keyword id="KW-0472">Membrane</keyword>
<keyword id="KW-0594">Phospholipid biosynthesis</keyword>
<keyword id="KW-1208">Phospholipid metabolism</keyword>
<keyword id="KW-1185">Reference proteome</keyword>
<keyword id="KW-0808">Transferase</keyword>
<keyword id="KW-0812">Transmembrane</keyword>
<keyword id="KW-1133">Transmembrane helix</keyword>
<comment type="function">
    <text evidence="1">Catalyzes the transfer of an acyl group from acyl-phosphate (acyl-PO(4)) to glycerol-3-phosphate (G3P) to form lysophosphatidic acid (LPA). This enzyme utilizes acyl-phosphate as fatty acyl donor, but not acyl-CoA or acyl-ACP.</text>
</comment>
<comment type="catalytic activity">
    <reaction evidence="1">
        <text>an acyl phosphate + sn-glycerol 3-phosphate = a 1-acyl-sn-glycero-3-phosphate + phosphate</text>
        <dbReference type="Rhea" id="RHEA:34075"/>
        <dbReference type="ChEBI" id="CHEBI:43474"/>
        <dbReference type="ChEBI" id="CHEBI:57597"/>
        <dbReference type="ChEBI" id="CHEBI:57970"/>
        <dbReference type="ChEBI" id="CHEBI:59918"/>
        <dbReference type="EC" id="2.3.1.275"/>
    </reaction>
</comment>
<comment type="pathway">
    <text evidence="1">Lipid metabolism; phospholipid metabolism.</text>
</comment>
<comment type="subunit">
    <text evidence="1">Probably interacts with PlsX.</text>
</comment>
<comment type="subcellular location">
    <subcellularLocation>
        <location evidence="1">Cell membrane</location>
        <topology evidence="1">Multi-pass membrane protein</topology>
    </subcellularLocation>
</comment>
<comment type="similarity">
    <text evidence="1">Belongs to the PlsY family.</text>
</comment>
<dbReference type="EC" id="2.3.1.275" evidence="1"/>
<dbReference type="EMBL" id="AE005176">
    <property type="protein sequence ID" value="AAK05076.1"/>
    <property type="molecule type" value="Genomic_DNA"/>
</dbReference>
<dbReference type="PIR" id="B86747">
    <property type="entry name" value="B86747"/>
</dbReference>
<dbReference type="RefSeq" id="NP_267134.1">
    <property type="nucleotide sequence ID" value="NC_002662.1"/>
</dbReference>
<dbReference type="RefSeq" id="WP_010905665.1">
    <property type="nucleotide sequence ID" value="NC_002662.1"/>
</dbReference>
<dbReference type="SMR" id="Q9CGW4"/>
<dbReference type="PaxDb" id="272623-L5517"/>
<dbReference type="EnsemblBacteria" id="AAK05076">
    <property type="protein sequence ID" value="AAK05076"/>
    <property type="gene ID" value="L5517"/>
</dbReference>
<dbReference type="GeneID" id="89633164"/>
<dbReference type="KEGG" id="lla:L5517"/>
<dbReference type="PATRIC" id="fig|272623.7.peg.1046"/>
<dbReference type="eggNOG" id="COG0344">
    <property type="taxonomic scope" value="Bacteria"/>
</dbReference>
<dbReference type="HOGENOM" id="CLU_081254_4_0_9"/>
<dbReference type="OrthoDB" id="9777124at2"/>
<dbReference type="UniPathway" id="UPA00085"/>
<dbReference type="Proteomes" id="UP000002196">
    <property type="component" value="Chromosome"/>
</dbReference>
<dbReference type="GO" id="GO:0005886">
    <property type="term" value="C:plasma membrane"/>
    <property type="evidence" value="ECO:0007669"/>
    <property type="project" value="UniProtKB-SubCell"/>
</dbReference>
<dbReference type="GO" id="GO:0043772">
    <property type="term" value="F:acyl-phosphate glycerol-3-phosphate acyltransferase activity"/>
    <property type="evidence" value="ECO:0007669"/>
    <property type="project" value="UniProtKB-UniRule"/>
</dbReference>
<dbReference type="GO" id="GO:0008654">
    <property type="term" value="P:phospholipid biosynthetic process"/>
    <property type="evidence" value="ECO:0007669"/>
    <property type="project" value="UniProtKB-UniRule"/>
</dbReference>
<dbReference type="HAMAP" id="MF_01043">
    <property type="entry name" value="PlsY"/>
    <property type="match status" value="1"/>
</dbReference>
<dbReference type="InterPro" id="IPR003811">
    <property type="entry name" value="G3P_acylTferase_PlsY"/>
</dbReference>
<dbReference type="NCBIfam" id="TIGR00023">
    <property type="entry name" value="glycerol-3-phosphate 1-O-acyltransferase PlsY"/>
    <property type="match status" value="1"/>
</dbReference>
<dbReference type="PANTHER" id="PTHR30309:SF0">
    <property type="entry name" value="GLYCEROL-3-PHOSPHATE ACYLTRANSFERASE-RELATED"/>
    <property type="match status" value="1"/>
</dbReference>
<dbReference type="PANTHER" id="PTHR30309">
    <property type="entry name" value="INNER MEMBRANE PROTEIN YGIH"/>
    <property type="match status" value="1"/>
</dbReference>
<dbReference type="Pfam" id="PF02660">
    <property type="entry name" value="G3P_acyltransf"/>
    <property type="match status" value="1"/>
</dbReference>
<dbReference type="SMART" id="SM01207">
    <property type="entry name" value="G3P_acyltransf"/>
    <property type="match status" value="1"/>
</dbReference>
<evidence type="ECO:0000255" key="1">
    <source>
        <dbReference type="HAMAP-Rule" id="MF_01043"/>
    </source>
</evidence>
<feature type="chain" id="PRO_0000188389" description="Glycerol-3-phosphate acyltransferase">
    <location>
        <begin position="1"/>
        <end position="213"/>
    </location>
</feature>
<feature type="transmembrane region" description="Helical" evidence="1">
    <location>
        <begin position="4"/>
        <end position="24"/>
    </location>
</feature>
<feature type="transmembrane region" description="Helical" evidence="1">
    <location>
        <begin position="48"/>
        <end position="68"/>
    </location>
</feature>
<feature type="transmembrane region" description="Helical" evidence="1">
    <location>
        <begin position="71"/>
        <end position="91"/>
    </location>
</feature>
<feature type="transmembrane region" description="Helical" evidence="1">
    <location>
        <begin position="113"/>
        <end position="133"/>
    </location>
</feature>
<feature type="transmembrane region" description="Helical" evidence="1">
    <location>
        <begin position="144"/>
        <end position="164"/>
    </location>
</feature>
<feature type="transmembrane region" description="Helical" evidence="1">
    <location>
        <begin position="165"/>
        <end position="185"/>
    </location>
</feature>
<accession>Q9CGW4</accession>
<name>PLSY_LACLA</name>